<feature type="signal peptide" evidence="5">
    <location>
        <begin position="1"/>
        <end position="24"/>
    </location>
</feature>
<feature type="chain" id="PRO_0000389582" description="Beta-glucosidase 20">
    <location>
        <begin position="25"/>
        <end position="535"/>
    </location>
</feature>
<feature type="short sequence motif" description="Prevents secretion from ER" evidence="7">
    <location>
        <begin position="532"/>
        <end position="535"/>
    </location>
</feature>
<feature type="active site" description="Proton donor" evidence="3">
    <location>
        <position position="205"/>
    </location>
</feature>
<feature type="active site" description="Nucleophile" evidence="3">
    <location>
        <position position="424"/>
    </location>
</feature>
<feature type="binding site" evidence="3">
    <location>
        <position position="56"/>
    </location>
    <ligand>
        <name>a beta-D-glucoside</name>
        <dbReference type="ChEBI" id="CHEBI:22798"/>
    </ligand>
</feature>
<feature type="binding site" evidence="3">
    <location>
        <position position="159"/>
    </location>
    <ligand>
        <name>a beta-D-glucoside</name>
        <dbReference type="ChEBI" id="CHEBI:22798"/>
    </ligand>
</feature>
<feature type="binding site" evidence="3">
    <location>
        <begin position="204"/>
        <end position="205"/>
    </location>
    <ligand>
        <name>a beta-D-glucoside</name>
        <dbReference type="ChEBI" id="CHEBI:22798"/>
    </ligand>
</feature>
<feature type="binding site" evidence="3">
    <location>
        <position position="351"/>
    </location>
    <ligand>
        <name>a beta-D-glucoside</name>
        <dbReference type="ChEBI" id="CHEBI:22798"/>
    </ligand>
</feature>
<feature type="binding site" evidence="4">
    <location>
        <position position="424"/>
    </location>
    <ligand>
        <name>a beta-D-glucoside</name>
        <dbReference type="ChEBI" id="CHEBI:22798"/>
    </ligand>
</feature>
<feature type="binding site" evidence="3">
    <location>
        <position position="475"/>
    </location>
    <ligand>
        <name>a beta-D-glucoside</name>
        <dbReference type="ChEBI" id="CHEBI:22798"/>
    </ligand>
</feature>
<feature type="binding site" evidence="3">
    <location>
        <begin position="482"/>
        <end position="483"/>
    </location>
    <ligand>
        <name>a beta-D-glucoside</name>
        <dbReference type="ChEBI" id="CHEBI:22798"/>
    </ligand>
</feature>
<feature type="binding site" evidence="2">
    <location>
        <position position="491"/>
    </location>
    <ligand>
        <name>a beta-D-glucoside</name>
        <dbReference type="ChEBI" id="CHEBI:22798"/>
    </ligand>
</feature>
<feature type="glycosylation site" description="N-linked (GlcNAc...) asparagine" evidence="6">
    <location>
        <position position="187"/>
    </location>
</feature>
<feature type="glycosylation site" description="N-linked (GlcNAc...) asparagine" evidence="6">
    <location>
        <position position="468"/>
    </location>
</feature>
<feature type="glycosylation site" description="N-linked (GlcNAc...) asparagine" evidence="6">
    <location>
        <position position="501"/>
    </location>
</feature>
<feature type="disulfide bond" evidence="3">
    <location>
        <begin position="224"/>
        <end position="235"/>
    </location>
</feature>
<feature type="sequence conflict" description="In Ref. 1; AAC39504." evidence="9" ref="1">
    <original>P</original>
    <variation>T</variation>
    <location>
        <position position="362"/>
    </location>
</feature>
<gene>
    <name evidence="8" type="primary">BGLU20</name>
    <name evidence="10" type="ordered locus">At1g75940</name>
    <name evidence="11" type="ORF">T4O12.15</name>
</gene>
<sequence>MGRFHKFPLLGLVLFLGLTGSLIAANEYACSSTDIHFTRANFPKGFIFGTATAAFQVEGAVNEGCRGPSMWDVYTKKFPHKCNYHNADVAVDFYHRYKEDIKLMKNLNTDGFRFSIAWPRIFPHGRMEKGISKAGVQYYHDLIDELLANGITPLVTVFHWDTPQDLEDEYGGFLSDRIIKDFTEYANFTFQEYGDKVKHWITFNEPWVFSRAGYDIGNKAPGRCSKYIKEHGEMCHDGRSGHEAYIVSHNMLLAHADAVDAFRKCDKCKGGKIGIAHSPAWFEAHELSDEEHETPVTGLIDFILGWHLHPTTYGDYPQSMKDHIGHRLPKFTEAQKEKLKNSADFVGINYYTSVFALHDEEPDPSQPSWQSDSLVDWEPRYVDKFNAFANKPDVAKVEVYAKGLRSLLKYIKDKYGNPEIMITENGYGEDLGEQDTSLVVALSDQHRTYYIQKHLLSLHEAICDDKVNVTGYFHWSLMDNFEWQDGYKARFGLYYVDYKNNLTRHEKLSAQWYSSFLHDGSKEFEIEHEFEHDEL</sequence>
<keyword id="KW-1015">Disulfide bond</keyword>
<keyword id="KW-0256">Endoplasmic reticulum</keyword>
<keyword id="KW-0325">Glycoprotein</keyword>
<keyword id="KW-0326">Glycosidase</keyword>
<keyword id="KW-0378">Hydrolase</keyword>
<keyword id="KW-1185">Reference proteome</keyword>
<keyword id="KW-0732">Signal</keyword>
<accession>Q84WV2</accession>
<accession>O49117</accession>
<accession>Q8VXW3</accession>
<accession>Q9LQS3</accession>
<evidence type="ECO:0000250" key="1">
    <source>
        <dbReference type="UniProtKB" id="O64879"/>
    </source>
</evidence>
<evidence type="ECO:0000250" key="2">
    <source>
        <dbReference type="UniProtKB" id="Q1XH05"/>
    </source>
</evidence>
<evidence type="ECO:0000250" key="3">
    <source>
        <dbReference type="UniProtKB" id="Q7XSK0"/>
    </source>
</evidence>
<evidence type="ECO:0000250" key="4">
    <source>
        <dbReference type="UniProtKB" id="Q9SPP9"/>
    </source>
</evidence>
<evidence type="ECO:0000255" key="5"/>
<evidence type="ECO:0000255" key="6">
    <source>
        <dbReference type="PROSITE-ProRule" id="PRU00498"/>
    </source>
</evidence>
<evidence type="ECO:0000255" key="7">
    <source>
        <dbReference type="PROSITE-ProRule" id="PRU10138"/>
    </source>
</evidence>
<evidence type="ECO:0000303" key="8">
    <source>
    </source>
</evidence>
<evidence type="ECO:0000305" key="9"/>
<evidence type="ECO:0000312" key="10">
    <source>
        <dbReference type="Araport" id="AT1G75940"/>
    </source>
</evidence>
<evidence type="ECO:0000312" key="11">
    <source>
        <dbReference type="EMBL" id="AAF26759.2"/>
    </source>
</evidence>
<proteinExistence type="evidence at transcript level"/>
<reference key="1">
    <citation type="journal article" date="1998" name="Plant Mol. Biol.">
        <title>Identification, sequence analysis and expression studies of novel anther-specific genes of Arabidopsis thaliana.</title>
        <authorList>
            <person name="Rubinelli P."/>
            <person name="Hu Y."/>
            <person name="Ma H."/>
        </authorList>
    </citation>
    <scope>NUCLEOTIDE SEQUENCE [MRNA]</scope>
</reference>
<reference key="2">
    <citation type="journal article" date="2000" name="Nature">
        <title>Sequence and analysis of chromosome 1 of the plant Arabidopsis thaliana.</title>
        <authorList>
            <person name="Theologis A."/>
            <person name="Ecker J.R."/>
            <person name="Palm C.J."/>
            <person name="Federspiel N.A."/>
            <person name="Kaul S."/>
            <person name="White O."/>
            <person name="Alonso J."/>
            <person name="Altafi H."/>
            <person name="Araujo R."/>
            <person name="Bowman C.L."/>
            <person name="Brooks S.Y."/>
            <person name="Buehler E."/>
            <person name="Chan A."/>
            <person name="Chao Q."/>
            <person name="Chen H."/>
            <person name="Cheuk R.F."/>
            <person name="Chin C.W."/>
            <person name="Chung M.K."/>
            <person name="Conn L."/>
            <person name="Conway A.B."/>
            <person name="Conway A.R."/>
            <person name="Creasy T.H."/>
            <person name="Dewar K."/>
            <person name="Dunn P."/>
            <person name="Etgu P."/>
            <person name="Feldblyum T.V."/>
            <person name="Feng J.-D."/>
            <person name="Fong B."/>
            <person name="Fujii C.Y."/>
            <person name="Gill J.E."/>
            <person name="Goldsmith A.D."/>
            <person name="Haas B."/>
            <person name="Hansen N.F."/>
            <person name="Hughes B."/>
            <person name="Huizar L."/>
            <person name="Hunter J.L."/>
            <person name="Jenkins J."/>
            <person name="Johnson-Hopson C."/>
            <person name="Khan S."/>
            <person name="Khaykin E."/>
            <person name="Kim C.J."/>
            <person name="Koo H.L."/>
            <person name="Kremenetskaia I."/>
            <person name="Kurtz D.B."/>
            <person name="Kwan A."/>
            <person name="Lam B."/>
            <person name="Langin-Hooper S."/>
            <person name="Lee A."/>
            <person name="Lee J.M."/>
            <person name="Lenz C.A."/>
            <person name="Li J.H."/>
            <person name="Li Y.-P."/>
            <person name="Lin X."/>
            <person name="Liu S.X."/>
            <person name="Liu Z.A."/>
            <person name="Luros J.S."/>
            <person name="Maiti R."/>
            <person name="Marziali A."/>
            <person name="Militscher J."/>
            <person name="Miranda M."/>
            <person name="Nguyen M."/>
            <person name="Nierman W.C."/>
            <person name="Osborne B.I."/>
            <person name="Pai G."/>
            <person name="Peterson J."/>
            <person name="Pham P.K."/>
            <person name="Rizzo M."/>
            <person name="Rooney T."/>
            <person name="Rowley D."/>
            <person name="Sakano H."/>
            <person name="Salzberg S.L."/>
            <person name="Schwartz J.R."/>
            <person name="Shinn P."/>
            <person name="Southwick A.M."/>
            <person name="Sun H."/>
            <person name="Tallon L.J."/>
            <person name="Tambunga G."/>
            <person name="Toriumi M.J."/>
            <person name="Town C.D."/>
            <person name="Utterback T."/>
            <person name="Van Aken S."/>
            <person name="Vaysberg M."/>
            <person name="Vysotskaia V.S."/>
            <person name="Walker M."/>
            <person name="Wu D."/>
            <person name="Yu G."/>
            <person name="Fraser C.M."/>
            <person name="Venter J.C."/>
            <person name="Davis R.W."/>
        </authorList>
    </citation>
    <scope>NUCLEOTIDE SEQUENCE [LARGE SCALE GENOMIC DNA]</scope>
    <source>
        <strain>cv. Columbia</strain>
    </source>
</reference>
<reference key="3">
    <citation type="journal article" date="2017" name="Plant J.">
        <title>Araport11: a complete reannotation of the Arabidopsis thaliana reference genome.</title>
        <authorList>
            <person name="Cheng C.Y."/>
            <person name="Krishnakumar V."/>
            <person name="Chan A.P."/>
            <person name="Thibaud-Nissen F."/>
            <person name="Schobel S."/>
            <person name="Town C.D."/>
        </authorList>
    </citation>
    <scope>GENOME REANNOTATION</scope>
    <source>
        <strain>cv. Columbia</strain>
    </source>
</reference>
<reference key="4">
    <citation type="journal article" date="2003" name="Science">
        <title>Empirical analysis of transcriptional activity in the Arabidopsis genome.</title>
        <authorList>
            <person name="Yamada K."/>
            <person name="Lim J."/>
            <person name="Dale J.M."/>
            <person name="Chen H."/>
            <person name="Shinn P."/>
            <person name="Palm C.J."/>
            <person name="Southwick A.M."/>
            <person name="Wu H.C."/>
            <person name="Kim C.J."/>
            <person name="Nguyen M."/>
            <person name="Pham P.K."/>
            <person name="Cheuk R.F."/>
            <person name="Karlin-Newmann G."/>
            <person name="Liu S.X."/>
            <person name="Lam B."/>
            <person name="Sakano H."/>
            <person name="Wu T."/>
            <person name="Yu G."/>
            <person name="Miranda M."/>
            <person name="Quach H.L."/>
            <person name="Tripp M."/>
            <person name="Chang C.H."/>
            <person name="Lee J.M."/>
            <person name="Toriumi M.J."/>
            <person name="Chan M.M."/>
            <person name="Tang C.C."/>
            <person name="Onodera C.S."/>
            <person name="Deng J.M."/>
            <person name="Akiyama K."/>
            <person name="Ansari Y."/>
            <person name="Arakawa T."/>
            <person name="Banh J."/>
            <person name="Banno F."/>
            <person name="Bowser L."/>
            <person name="Brooks S.Y."/>
            <person name="Carninci P."/>
            <person name="Chao Q."/>
            <person name="Choy N."/>
            <person name="Enju A."/>
            <person name="Goldsmith A.D."/>
            <person name="Gurjal M."/>
            <person name="Hansen N.F."/>
            <person name="Hayashizaki Y."/>
            <person name="Johnson-Hopson C."/>
            <person name="Hsuan V.W."/>
            <person name="Iida K."/>
            <person name="Karnes M."/>
            <person name="Khan S."/>
            <person name="Koesema E."/>
            <person name="Ishida J."/>
            <person name="Jiang P.X."/>
            <person name="Jones T."/>
            <person name="Kawai J."/>
            <person name="Kamiya A."/>
            <person name="Meyers C."/>
            <person name="Nakajima M."/>
            <person name="Narusaka M."/>
            <person name="Seki M."/>
            <person name="Sakurai T."/>
            <person name="Satou M."/>
            <person name="Tamse R."/>
            <person name="Vaysberg M."/>
            <person name="Wallender E.K."/>
            <person name="Wong C."/>
            <person name="Yamamura Y."/>
            <person name="Yuan S."/>
            <person name="Shinozaki K."/>
            <person name="Davis R.W."/>
            <person name="Theologis A."/>
            <person name="Ecker J.R."/>
        </authorList>
    </citation>
    <scope>NUCLEOTIDE SEQUENCE [LARGE SCALE MRNA]</scope>
    <source>
        <strain>cv. Columbia</strain>
    </source>
</reference>
<reference key="5">
    <citation type="journal article" date="2004" name="Plant Mol. Biol.">
        <title>Functional genomic analysis of Arabidopsis thaliana glycoside hydrolase family 1.</title>
        <authorList>
            <person name="Xu Z."/>
            <person name="Escamilla-Trevino L.L."/>
            <person name="Zeng L."/>
            <person name="Lalgondar M."/>
            <person name="Bevan D.R."/>
            <person name="Winkel B.S.J."/>
            <person name="Mohamed A."/>
            <person name="Cheng C.-L."/>
            <person name="Shih M.-C."/>
            <person name="Poulton J.E."/>
            <person name="Esen A."/>
        </authorList>
    </citation>
    <scope>GENE FAMILY</scope>
    <scope>NOMENCLATURE</scope>
</reference>
<dbReference type="EC" id="3.2.1.21" evidence="1"/>
<dbReference type="EMBL" id="AF037590">
    <property type="protein sequence ID" value="AAC39504.1"/>
    <property type="molecule type" value="mRNA"/>
</dbReference>
<dbReference type="EMBL" id="AC007396">
    <property type="protein sequence ID" value="AAF26759.2"/>
    <property type="status" value="ALT_SEQ"/>
    <property type="molecule type" value="Genomic_DNA"/>
</dbReference>
<dbReference type="EMBL" id="CP002684">
    <property type="protein sequence ID" value="AEE35779.1"/>
    <property type="molecule type" value="Genomic_DNA"/>
</dbReference>
<dbReference type="EMBL" id="AY074517">
    <property type="protein sequence ID" value="AAL67131.1"/>
    <property type="molecule type" value="mRNA"/>
</dbReference>
<dbReference type="EMBL" id="BT002735">
    <property type="protein sequence ID" value="AAO22564.1"/>
    <property type="molecule type" value="mRNA"/>
</dbReference>
<dbReference type="PIR" id="T52048">
    <property type="entry name" value="T52048"/>
</dbReference>
<dbReference type="RefSeq" id="NP_177722.1">
    <property type="nucleotide sequence ID" value="NM_106244.3"/>
</dbReference>
<dbReference type="SMR" id="Q84WV2"/>
<dbReference type="BioGRID" id="29146">
    <property type="interactions" value="1"/>
</dbReference>
<dbReference type="FunCoup" id="Q84WV2">
    <property type="interactions" value="197"/>
</dbReference>
<dbReference type="STRING" id="3702.Q84WV2"/>
<dbReference type="CAZy" id="GH1">
    <property type="family name" value="Glycoside Hydrolase Family 1"/>
</dbReference>
<dbReference type="GlyCosmos" id="Q84WV2">
    <property type="glycosylation" value="3 sites, No reported glycans"/>
</dbReference>
<dbReference type="GlyGen" id="Q84WV2">
    <property type="glycosylation" value="3 sites"/>
</dbReference>
<dbReference type="PaxDb" id="3702-AT1G75940.1"/>
<dbReference type="ProteomicsDB" id="240396"/>
<dbReference type="EnsemblPlants" id="AT1G75940.1">
    <property type="protein sequence ID" value="AT1G75940.1"/>
    <property type="gene ID" value="AT1G75940"/>
</dbReference>
<dbReference type="GeneID" id="843927"/>
<dbReference type="Gramene" id="AT1G75940.1">
    <property type="protein sequence ID" value="AT1G75940.1"/>
    <property type="gene ID" value="AT1G75940"/>
</dbReference>
<dbReference type="KEGG" id="ath:AT1G75940"/>
<dbReference type="Araport" id="AT1G75940"/>
<dbReference type="TAIR" id="AT1G75940">
    <property type="gene designation" value="ATA27"/>
</dbReference>
<dbReference type="eggNOG" id="KOG0626">
    <property type="taxonomic scope" value="Eukaryota"/>
</dbReference>
<dbReference type="HOGENOM" id="CLU_001859_1_0_1"/>
<dbReference type="InParanoid" id="Q84WV2"/>
<dbReference type="OMA" id="YTFNEPQ"/>
<dbReference type="PhylomeDB" id="Q84WV2"/>
<dbReference type="BioCyc" id="ARA:AT1G75940-MONOMER"/>
<dbReference type="PRO" id="PR:Q84WV2"/>
<dbReference type="Proteomes" id="UP000006548">
    <property type="component" value="Chromosome 1"/>
</dbReference>
<dbReference type="ExpressionAtlas" id="Q84WV2">
    <property type="expression patterns" value="baseline and differential"/>
</dbReference>
<dbReference type="GO" id="GO:0005788">
    <property type="term" value="C:endoplasmic reticulum lumen"/>
    <property type="evidence" value="ECO:0000250"/>
    <property type="project" value="TAIR"/>
</dbReference>
<dbReference type="GO" id="GO:0008422">
    <property type="term" value="F:beta-glucosidase activity"/>
    <property type="evidence" value="ECO:0007669"/>
    <property type="project" value="UniProtKB-EC"/>
</dbReference>
<dbReference type="GO" id="GO:0005975">
    <property type="term" value="P:carbohydrate metabolic process"/>
    <property type="evidence" value="ECO:0007669"/>
    <property type="project" value="InterPro"/>
</dbReference>
<dbReference type="FunFam" id="3.20.20.80:FF:000022">
    <property type="entry name" value="Beta-glucosidase 11"/>
    <property type="match status" value="1"/>
</dbReference>
<dbReference type="Gene3D" id="3.20.20.80">
    <property type="entry name" value="Glycosidases"/>
    <property type="match status" value="1"/>
</dbReference>
<dbReference type="InterPro" id="IPR001360">
    <property type="entry name" value="Glyco_hydro_1"/>
</dbReference>
<dbReference type="InterPro" id="IPR033132">
    <property type="entry name" value="Glyco_hydro_1_N_CS"/>
</dbReference>
<dbReference type="InterPro" id="IPR017853">
    <property type="entry name" value="Glycoside_hydrolase_SF"/>
</dbReference>
<dbReference type="PANTHER" id="PTHR10353:SF200">
    <property type="entry name" value="BETA-GLUCOSIDASE 20"/>
    <property type="match status" value="1"/>
</dbReference>
<dbReference type="PANTHER" id="PTHR10353">
    <property type="entry name" value="GLYCOSYL HYDROLASE"/>
    <property type="match status" value="1"/>
</dbReference>
<dbReference type="Pfam" id="PF00232">
    <property type="entry name" value="Glyco_hydro_1"/>
    <property type="match status" value="1"/>
</dbReference>
<dbReference type="PRINTS" id="PR00131">
    <property type="entry name" value="GLHYDRLASE1"/>
</dbReference>
<dbReference type="SUPFAM" id="SSF51445">
    <property type="entry name" value="(Trans)glycosidases"/>
    <property type="match status" value="1"/>
</dbReference>
<dbReference type="PROSITE" id="PS00014">
    <property type="entry name" value="ER_TARGET"/>
    <property type="match status" value="1"/>
</dbReference>
<dbReference type="PROSITE" id="PS00653">
    <property type="entry name" value="GLYCOSYL_HYDROL_F1_2"/>
    <property type="match status" value="1"/>
</dbReference>
<name>BGL20_ARATH</name>
<protein>
    <recommendedName>
        <fullName evidence="8">Beta-glucosidase 20</fullName>
        <shortName evidence="8">AtBGLU20</shortName>
        <ecNumber evidence="1">3.2.1.21</ecNumber>
    </recommendedName>
</protein>
<comment type="catalytic activity">
    <reaction evidence="1">
        <text>Hydrolysis of terminal, non-reducing beta-D-glucosyl residues with release of beta-D-glucose.</text>
        <dbReference type="EC" id="3.2.1.21"/>
    </reaction>
</comment>
<comment type="subcellular location">
    <subcellularLocation>
        <location evidence="7">Endoplasmic reticulum lumen</location>
    </subcellularLocation>
</comment>
<comment type="similarity">
    <text evidence="9">Belongs to the glycosyl hydrolase 1 family.</text>
</comment>
<comment type="sequence caution" evidence="9">
    <conflict type="erroneous gene model prediction">
        <sequence resource="EMBL-CDS" id="AAF26759"/>
    </conflict>
    <text>The predicted gene At1g75930 has been split into 2 genes: At1g75930 and At1g75940.</text>
</comment>
<organism>
    <name type="scientific">Arabidopsis thaliana</name>
    <name type="common">Mouse-ear cress</name>
    <dbReference type="NCBI Taxonomy" id="3702"/>
    <lineage>
        <taxon>Eukaryota</taxon>
        <taxon>Viridiplantae</taxon>
        <taxon>Streptophyta</taxon>
        <taxon>Embryophyta</taxon>
        <taxon>Tracheophyta</taxon>
        <taxon>Spermatophyta</taxon>
        <taxon>Magnoliopsida</taxon>
        <taxon>eudicotyledons</taxon>
        <taxon>Gunneridae</taxon>
        <taxon>Pentapetalae</taxon>
        <taxon>rosids</taxon>
        <taxon>malvids</taxon>
        <taxon>Brassicales</taxon>
        <taxon>Brassicaceae</taxon>
        <taxon>Camelineae</taxon>
        <taxon>Arabidopsis</taxon>
    </lineage>
</organism>